<reference key="1">
    <citation type="journal article" date="1997" name="J. Biol. Chem.">
        <title>Cloning, overexpression, and characterization of glutaredoxin 2, an atypical glutaredoxin from Escherichia coli.</title>
        <authorList>
            <person name="Vlamis-Gardikas A."/>
            <person name="Aaslund F."/>
            <person name="Spyrou G."/>
            <person name="Bergman T."/>
            <person name="Holmgren A."/>
        </authorList>
    </citation>
    <scope>NUCLEOTIDE SEQUENCE [GENOMIC DNA]</scope>
    <source>
        <strain>K12</strain>
    </source>
</reference>
<reference key="2">
    <citation type="journal article" date="1996" name="DNA Res.">
        <title>A 718-kb DNA sequence of the Escherichia coli K-12 genome corresponding to the 12.7-28.0 min region on the linkage map.</title>
        <authorList>
            <person name="Oshima T."/>
            <person name="Aiba H."/>
            <person name="Baba T."/>
            <person name="Fujita K."/>
            <person name="Hayashi K."/>
            <person name="Honjo A."/>
            <person name="Ikemoto K."/>
            <person name="Inada T."/>
            <person name="Itoh T."/>
            <person name="Kajihara M."/>
            <person name="Kanai K."/>
            <person name="Kashimoto K."/>
            <person name="Kimura S."/>
            <person name="Kitagawa M."/>
            <person name="Makino K."/>
            <person name="Masuda S."/>
            <person name="Miki T."/>
            <person name="Mizobuchi K."/>
            <person name="Mori H."/>
            <person name="Motomura K."/>
            <person name="Nakamura Y."/>
            <person name="Nashimoto H."/>
            <person name="Nishio Y."/>
            <person name="Saito N."/>
            <person name="Sampei G."/>
            <person name="Seki Y."/>
            <person name="Tagami H."/>
            <person name="Takemoto K."/>
            <person name="Wada C."/>
            <person name="Yamamoto Y."/>
            <person name="Yano M."/>
            <person name="Horiuchi T."/>
        </authorList>
    </citation>
    <scope>NUCLEOTIDE SEQUENCE [LARGE SCALE GENOMIC DNA]</scope>
    <source>
        <strain>K12 / W3110 / ATCC 27325 / DSM 5911</strain>
    </source>
</reference>
<reference key="3">
    <citation type="journal article" date="1997" name="Science">
        <title>The complete genome sequence of Escherichia coli K-12.</title>
        <authorList>
            <person name="Blattner F.R."/>
            <person name="Plunkett G. III"/>
            <person name="Bloch C.A."/>
            <person name="Perna N.T."/>
            <person name="Burland V."/>
            <person name="Riley M."/>
            <person name="Collado-Vides J."/>
            <person name="Glasner J.D."/>
            <person name="Rode C.K."/>
            <person name="Mayhew G.F."/>
            <person name="Gregor J."/>
            <person name="Davis N.W."/>
            <person name="Kirkpatrick H.A."/>
            <person name="Goeden M.A."/>
            <person name="Rose D.J."/>
            <person name="Mau B."/>
            <person name="Shao Y."/>
        </authorList>
    </citation>
    <scope>NUCLEOTIDE SEQUENCE [LARGE SCALE GENOMIC DNA]</scope>
    <source>
        <strain>K12 / MG1655 / ATCC 47076</strain>
    </source>
</reference>
<reference key="4">
    <citation type="journal article" date="2006" name="Mol. Syst. Biol.">
        <title>Highly accurate genome sequences of Escherichia coli K-12 strains MG1655 and W3110.</title>
        <authorList>
            <person name="Hayashi K."/>
            <person name="Morooka N."/>
            <person name="Yamamoto Y."/>
            <person name="Fujita K."/>
            <person name="Isono K."/>
            <person name="Choi S."/>
            <person name="Ohtsubo E."/>
            <person name="Baba T."/>
            <person name="Wanner B.L."/>
            <person name="Mori H."/>
            <person name="Horiuchi T."/>
        </authorList>
    </citation>
    <scope>NUCLEOTIDE SEQUENCE [LARGE SCALE GENOMIC DNA]</scope>
    <source>
        <strain>K12 / W3110 / ATCC 27325 / DSM 5911</strain>
    </source>
</reference>
<reference key="5">
    <citation type="journal article" date="2001" name="J. Bacteriol.">
        <title>Analysis of a complete library of putative drug transporter genes in Escherichia coli.</title>
        <authorList>
            <person name="Nishino K."/>
            <person name="Yamaguchi A."/>
        </authorList>
    </citation>
    <scope>FUNCTION</scope>
</reference>
<reference key="6">
    <citation type="journal article" date="2005" name="Mol. Microbiol.">
        <title>Indole induces the expression of multidrug exporter genes in Escherichia coli.</title>
        <authorList>
            <person name="Hirakawa H."/>
            <person name="Inazumi Y."/>
            <person name="Masaki T."/>
            <person name="Hirata T."/>
            <person name="Yamaguchi A."/>
        </authorList>
    </citation>
    <scope>INDUCTION</scope>
    <source>
        <strain>K12</strain>
    </source>
</reference>
<reference key="7">
    <citation type="journal article" date="2005" name="Science">
        <title>Global topology analysis of the Escherichia coli inner membrane proteome.</title>
        <authorList>
            <person name="Daley D.O."/>
            <person name="Rapp M."/>
            <person name="Granseth E."/>
            <person name="Melen K."/>
            <person name="Drew D."/>
            <person name="von Heijne G."/>
        </authorList>
    </citation>
    <scope>TOPOLOGY [LARGE SCALE ANALYSIS]</scope>
    <source>
        <strain>K12 / MG1655 / ATCC 47076</strain>
    </source>
</reference>
<organism>
    <name type="scientific">Escherichia coli (strain K12)</name>
    <dbReference type="NCBI Taxonomy" id="83333"/>
    <lineage>
        <taxon>Bacteria</taxon>
        <taxon>Pseudomonadati</taxon>
        <taxon>Pseudomonadota</taxon>
        <taxon>Gammaproteobacteria</taxon>
        <taxon>Enterobacterales</taxon>
        <taxon>Enterobacteriaceae</taxon>
        <taxon>Escherichia</taxon>
    </lineage>
</organism>
<name>MDTH_ECOLI</name>
<protein>
    <recommendedName>
        <fullName>Multidrug resistance protein MdtH</fullName>
    </recommendedName>
</protein>
<proteinExistence type="evidence at protein level"/>
<keyword id="KW-0046">Antibiotic resistance</keyword>
<keyword id="KW-0997">Cell inner membrane</keyword>
<keyword id="KW-1003">Cell membrane</keyword>
<keyword id="KW-0472">Membrane</keyword>
<keyword id="KW-1185">Reference proteome</keyword>
<keyword id="KW-0812">Transmembrane</keyword>
<keyword id="KW-1133">Transmembrane helix</keyword>
<keyword id="KW-0813">Transport</keyword>
<sequence>MSRVSQARNLGKYFLLIDNMLVVLGFFVVFPLISIRFVDQMGWAAVMVGIALGLRQFIQQGLGIFGGAIADRFGAKPMIVTGMLMRAAGFATMGIAHEPWLLWFSCLLSGLGGTLFDPPRSALVVKLIRPQQRGRFFSLLMMQDSAGAVIGALLGSWLLQYDFRLVCATGAVLFVLCAAFNAWLLPAWKLSTVRTPVREGMTRVMRDKRFVTYVLTLAGYYMLAVQVMLMLPIMVNDVAGAPSAVKWMYAIEACLSLTLLYPIARWSEKHFRLEHRLMAGLLIMSLSMMPVGMVSGLQQLFTLICLFYIGSIIAEPARETLSASLADARARGSYMGFSRLGLAIGGAIGYIGGGWLFDLGKSAHQPELPWMMLGIIGIFTFLALGWQFSQKRAARRLLERDA</sequence>
<feature type="chain" id="PRO_0000173342" description="Multidrug resistance protein MdtH">
    <location>
        <begin position="1"/>
        <end position="402"/>
    </location>
</feature>
<feature type="topological domain" description="Cytoplasmic" evidence="1">
    <location>
        <begin position="1"/>
        <end position="12"/>
    </location>
</feature>
<feature type="transmembrane region" description="Helical" evidence="1">
    <location>
        <begin position="13"/>
        <end position="33"/>
    </location>
</feature>
<feature type="topological domain" description="Periplasmic" evidence="1">
    <location>
        <begin position="34"/>
        <end position="98"/>
    </location>
</feature>
<feature type="transmembrane region" description="Helical" evidence="1">
    <location>
        <begin position="99"/>
        <end position="116"/>
    </location>
</feature>
<feature type="topological domain" description="Cytoplasmic" evidence="1">
    <location>
        <begin position="117"/>
        <end position="138"/>
    </location>
</feature>
<feature type="transmembrane region" description="Helical" evidence="1">
    <location>
        <begin position="139"/>
        <end position="159"/>
    </location>
</feature>
<feature type="topological domain" description="Periplasmic" evidence="1">
    <location>
        <begin position="160"/>
        <end position="164"/>
    </location>
</feature>
<feature type="transmembrane region" description="Helical" evidence="1">
    <location>
        <begin position="165"/>
        <end position="185"/>
    </location>
</feature>
<feature type="topological domain" description="Cytoplasmic" evidence="1">
    <location>
        <begin position="186"/>
        <end position="213"/>
    </location>
</feature>
<feature type="transmembrane region" description="Helical" evidence="1">
    <location>
        <begin position="214"/>
        <end position="234"/>
    </location>
</feature>
<feature type="topological domain" description="Periplasmic" evidence="1">
    <location>
        <begin position="235"/>
        <end position="243"/>
    </location>
</feature>
<feature type="transmembrane region" description="Helical" evidence="1">
    <location>
        <begin position="244"/>
        <end position="264"/>
    </location>
</feature>
<feature type="topological domain" description="Cytoplasmic" evidence="1">
    <location>
        <begin position="265"/>
        <end position="276"/>
    </location>
</feature>
<feature type="transmembrane region" description="Helical" evidence="1">
    <location>
        <begin position="277"/>
        <end position="297"/>
    </location>
</feature>
<feature type="topological domain" description="Periplasmic" evidence="1">
    <location>
        <begin position="298"/>
        <end position="299"/>
    </location>
</feature>
<feature type="transmembrane region" description="Helical" evidence="1">
    <location>
        <begin position="300"/>
        <end position="320"/>
    </location>
</feature>
<feature type="topological domain" description="Cytoplasmic" evidence="1">
    <location>
        <begin position="321"/>
        <end position="339"/>
    </location>
</feature>
<feature type="transmembrane region" description="Helical" evidence="1">
    <location>
        <begin position="340"/>
        <end position="360"/>
    </location>
</feature>
<feature type="topological domain" description="Periplasmic" evidence="1">
    <location>
        <begin position="361"/>
        <end position="367"/>
    </location>
</feature>
<feature type="transmembrane region" description="Helical" evidence="1">
    <location>
        <begin position="368"/>
        <end position="388"/>
    </location>
</feature>
<feature type="topological domain" description="Cytoplasmic" evidence="1">
    <location>
        <begin position="389"/>
        <end position="402"/>
    </location>
</feature>
<feature type="sequence conflict" description="In Ref. 1; CAA63057." evidence="4" ref="1">
    <original>SA</original>
    <variation>RS</variation>
    <location>
        <begin position="322"/>
        <end position="323"/>
    </location>
</feature>
<gene>
    <name type="primary">mdtH</name>
    <name type="synonym">yceL</name>
    <name type="ordered locus">b1065</name>
    <name type="ordered locus">JW1052</name>
</gene>
<accession>P69367</accession>
<accession>P75929</accession>
<accession>P77042</accession>
<accession>Q9R7P2</accession>
<comment type="function">
    <text evidence="2">Confers resistance to norfloxacin and enoxacin.</text>
</comment>
<comment type="subcellular location">
    <subcellularLocation>
        <location>Cell inner membrane</location>
        <topology>Multi-pass membrane protein</topology>
    </subcellularLocation>
</comment>
<comment type="induction">
    <text evidence="3">Induced at least fivefold by indole in a dose-dependent manner.</text>
</comment>
<comment type="similarity">
    <text evidence="4">Belongs to the major facilitator superfamily. DHA1 family. MdtH (TC 2.A.1.2.21) subfamily.</text>
</comment>
<evidence type="ECO:0000255" key="1"/>
<evidence type="ECO:0000269" key="2">
    <source>
    </source>
</evidence>
<evidence type="ECO:0000269" key="3">
    <source>
    </source>
</evidence>
<evidence type="ECO:0000305" key="4"/>
<dbReference type="EMBL" id="X92076">
    <property type="protein sequence ID" value="CAA63057.1"/>
    <property type="molecule type" value="Genomic_DNA"/>
</dbReference>
<dbReference type="EMBL" id="U00096">
    <property type="protein sequence ID" value="AAC74149.2"/>
    <property type="molecule type" value="Genomic_DNA"/>
</dbReference>
<dbReference type="EMBL" id="AP009048">
    <property type="protein sequence ID" value="BAA35873.2"/>
    <property type="molecule type" value="Genomic_DNA"/>
</dbReference>
<dbReference type="PIR" id="F64849">
    <property type="entry name" value="F64849"/>
</dbReference>
<dbReference type="RefSeq" id="NP_415583.4">
    <property type="nucleotide sequence ID" value="NC_000913.3"/>
</dbReference>
<dbReference type="RefSeq" id="WP_000092206.1">
    <property type="nucleotide sequence ID" value="NZ_SSZK01000053.1"/>
</dbReference>
<dbReference type="SMR" id="P69367"/>
<dbReference type="BioGRID" id="4260075">
    <property type="interactions" value="315"/>
</dbReference>
<dbReference type="FunCoup" id="P69367">
    <property type="interactions" value="170"/>
</dbReference>
<dbReference type="IntAct" id="P69367">
    <property type="interactions" value="1"/>
</dbReference>
<dbReference type="STRING" id="511145.b1065"/>
<dbReference type="TCDB" id="2.A.1.2.21">
    <property type="family name" value="the major facilitator superfamily (mfs)"/>
</dbReference>
<dbReference type="PaxDb" id="511145-b1065"/>
<dbReference type="EnsemblBacteria" id="AAC74149">
    <property type="protein sequence ID" value="AAC74149"/>
    <property type="gene ID" value="b1065"/>
</dbReference>
<dbReference type="GeneID" id="75203652"/>
<dbReference type="GeneID" id="946920"/>
<dbReference type="KEGG" id="ecj:JW1052"/>
<dbReference type="KEGG" id="eco:b1065"/>
<dbReference type="KEGG" id="ecoc:C3026_06470"/>
<dbReference type="PATRIC" id="fig|1411691.4.peg.1203"/>
<dbReference type="EchoBASE" id="EB3637"/>
<dbReference type="eggNOG" id="COG0477">
    <property type="taxonomic scope" value="Bacteria"/>
</dbReference>
<dbReference type="HOGENOM" id="CLU_001265_60_2_6"/>
<dbReference type="InParanoid" id="P69367"/>
<dbReference type="OMA" id="FSLNYWA"/>
<dbReference type="OrthoDB" id="56516at2"/>
<dbReference type="PhylomeDB" id="P69367"/>
<dbReference type="BioCyc" id="EcoCyc:B1065-MONOMER"/>
<dbReference type="PRO" id="PR:P69367"/>
<dbReference type="Proteomes" id="UP000000625">
    <property type="component" value="Chromosome"/>
</dbReference>
<dbReference type="GO" id="GO:0005886">
    <property type="term" value="C:plasma membrane"/>
    <property type="evidence" value="ECO:0000314"/>
    <property type="project" value="EcoCyc"/>
</dbReference>
<dbReference type="GO" id="GO:0022857">
    <property type="term" value="F:transmembrane transporter activity"/>
    <property type="evidence" value="ECO:0007669"/>
    <property type="project" value="UniProtKB-UniRule"/>
</dbReference>
<dbReference type="GO" id="GO:0046677">
    <property type="term" value="P:response to antibiotic"/>
    <property type="evidence" value="ECO:0000315"/>
    <property type="project" value="EcoCyc"/>
</dbReference>
<dbReference type="CDD" id="cd17329">
    <property type="entry name" value="MFS_MdtH_MDR_like"/>
    <property type="match status" value="1"/>
</dbReference>
<dbReference type="FunFam" id="1.20.1250.20:FF:000039">
    <property type="entry name" value="Multidrug resistance protein MdtH"/>
    <property type="match status" value="1"/>
</dbReference>
<dbReference type="Gene3D" id="1.20.1250.20">
    <property type="entry name" value="MFS general substrate transporter like domains"/>
    <property type="match status" value="1"/>
</dbReference>
<dbReference type="HAMAP" id="MF_01529">
    <property type="entry name" value="MFS_MdtH"/>
    <property type="match status" value="1"/>
</dbReference>
<dbReference type="InterPro" id="IPR011701">
    <property type="entry name" value="MFS"/>
</dbReference>
<dbReference type="InterPro" id="IPR020846">
    <property type="entry name" value="MFS_dom"/>
</dbReference>
<dbReference type="InterPro" id="IPR036259">
    <property type="entry name" value="MFS_trans_sf"/>
</dbReference>
<dbReference type="InterPro" id="IPR050171">
    <property type="entry name" value="MFS_Transporters"/>
</dbReference>
<dbReference type="InterPro" id="IPR022855">
    <property type="entry name" value="Multidrug-R_MdtH"/>
</dbReference>
<dbReference type="NCBIfam" id="NF008650">
    <property type="entry name" value="PRK11646.1"/>
    <property type="match status" value="1"/>
</dbReference>
<dbReference type="PANTHER" id="PTHR23517:SF2">
    <property type="entry name" value="MULTIDRUG RESISTANCE PROTEIN MDTH"/>
    <property type="match status" value="1"/>
</dbReference>
<dbReference type="PANTHER" id="PTHR23517">
    <property type="entry name" value="RESISTANCE PROTEIN MDTM, PUTATIVE-RELATED-RELATED"/>
    <property type="match status" value="1"/>
</dbReference>
<dbReference type="Pfam" id="PF07690">
    <property type="entry name" value="MFS_1"/>
    <property type="match status" value="1"/>
</dbReference>
<dbReference type="SUPFAM" id="SSF103473">
    <property type="entry name" value="MFS general substrate transporter"/>
    <property type="match status" value="1"/>
</dbReference>
<dbReference type="PROSITE" id="PS50850">
    <property type="entry name" value="MFS"/>
    <property type="match status" value="1"/>
</dbReference>